<evidence type="ECO:0000250" key="1">
    <source>
        <dbReference type="UniProtKB" id="P30231"/>
    </source>
</evidence>
<evidence type="ECO:0000305" key="2"/>
<proteinExistence type="evidence at protein level"/>
<accession>P30227</accession>
<comment type="function">
    <text>Possesses antifungal activity sensitive to inorganic cations.</text>
</comment>
<comment type="subunit">
    <text>Forms oligomers in its native state.</text>
</comment>
<comment type="similarity">
    <text evidence="2">Belongs to the DEFL family.</text>
</comment>
<dbReference type="PIR" id="S28989">
    <property type="entry name" value="S28989"/>
</dbReference>
<dbReference type="BMRB" id="P30227"/>
<dbReference type="Proteomes" id="UP000011750">
    <property type="component" value="Unplaced"/>
</dbReference>
<dbReference type="GO" id="GO:0050832">
    <property type="term" value="P:defense response to fungus"/>
    <property type="evidence" value="ECO:0007669"/>
    <property type="project" value="UniProtKB-KW"/>
</dbReference>
<dbReference type="GO" id="GO:0031640">
    <property type="term" value="P:killing of cells of another organism"/>
    <property type="evidence" value="ECO:0007669"/>
    <property type="project" value="UniProtKB-KW"/>
</dbReference>
<dbReference type="Gene3D" id="3.30.30.10">
    <property type="entry name" value="Knottin, scorpion toxin-like"/>
    <property type="match status" value="1"/>
</dbReference>
<dbReference type="InterPro" id="IPR008176">
    <property type="entry name" value="Defensin_plant"/>
</dbReference>
<dbReference type="InterPro" id="IPR036574">
    <property type="entry name" value="Scorpion_toxin-like_sf"/>
</dbReference>
<dbReference type="Pfam" id="PF00304">
    <property type="entry name" value="Gamma-thionin"/>
    <property type="match status" value="1"/>
</dbReference>
<dbReference type="SUPFAM" id="SSF57095">
    <property type="entry name" value="Scorpion toxin-like"/>
    <property type="match status" value="1"/>
</dbReference>
<dbReference type="PROSITE" id="PS00940">
    <property type="entry name" value="GAMMA_THIONIN"/>
    <property type="match status" value="1"/>
</dbReference>
<protein>
    <recommendedName>
        <fullName>Defensin-like protein 1</fullName>
    </recommendedName>
    <alternativeName>
        <fullName>Cysteine-rich antifungal protein 1</fullName>
        <shortName>AFP1</shortName>
    </alternativeName>
</protein>
<organism>
    <name type="scientific">Brassica campestris</name>
    <name type="common">Field mustard</name>
    <dbReference type="NCBI Taxonomy" id="3711"/>
    <lineage>
        <taxon>Eukaryota</taxon>
        <taxon>Viridiplantae</taxon>
        <taxon>Streptophyta</taxon>
        <taxon>Embryophyta</taxon>
        <taxon>Tracheophyta</taxon>
        <taxon>Spermatophyta</taxon>
        <taxon>Magnoliopsida</taxon>
        <taxon>eudicotyledons</taxon>
        <taxon>Gunneridae</taxon>
        <taxon>Pentapetalae</taxon>
        <taxon>rosids</taxon>
        <taxon>malvids</taxon>
        <taxon>Brassicales</taxon>
        <taxon>Brassicaceae</taxon>
        <taxon>Brassiceae</taxon>
        <taxon>Brassica</taxon>
    </lineage>
</organism>
<reference key="1">
    <citation type="journal article" date="1993" name="FEBS Lett.">
        <title>A new family of basic cysteine-rich plant antifungal proteins from Brassicaceae species.</title>
        <authorList>
            <person name="Terras F.R.G."/>
            <person name="Torrekens S."/>
            <person name="van Leuven F."/>
            <person name="Osborn R.W."/>
            <person name="Vanderleyden J."/>
            <person name="Cammue B.P.A."/>
            <person name="Broekaert W.F."/>
        </authorList>
    </citation>
    <scope>PROTEIN SEQUENCE</scope>
    <source>
        <tissue>Seed</tissue>
    </source>
</reference>
<sequence>QKLCERPSGTWSGVCGNNNACKNQCIN</sequence>
<keyword id="KW-0929">Antimicrobial</keyword>
<keyword id="KW-0903">Direct protein sequencing</keyword>
<keyword id="KW-0295">Fungicide</keyword>
<keyword id="KW-0611">Plant defense</keyword>
<keyword id="KW-0873">Pyrrolidone carboxylic acid</keyword>
<keyword id="KW-1185">Reference proteome</keyword>
<feature type="chain" id="PRO_0000074237" description="Defensin-like protein 1">
    <location>
        <begin position="1"/>
        <end position="27" status="greater than"/>
    </location>
</feature>
<feature type="modified residue" description="Pyrrolidone carboxylic acid" evidence="1">
    <location>
        <position position="1"/>
    </location>
</feature>
<feature type="non-terminal residue">
    <location>
        <position position="27"/>
    </location>
</feature>
<name>DEF1_BRACM</name>